<name>RL11_STAAB</name>
<reference key="1">
    <citation type="journal article" date="2007" name="PLoS ONE">
        <title>Molecular correlates of host specialization in Staphylococcus aureus.</title>
        <authorList>
            <person name="Herron-Olson L."/>
            <person name="Fitzgerald J.R."/>
            <person name="Musser J.M."/>
            <person name="Kapur V."/>
        </authorList>
    </citation>
    <scope>NUCLEOTIDE SEQUENCE [LARGE SCALE GENOMIC DNA]</scope>
    <source>
        <strain>bovine RF122 / ET3-1</strain>
    </source>
</reference>
<gene>
    <name evidence="2" type="primary">rplK</name>
    <name type="ordered locus">SAB0488</name>
</gene>
<organism>
    <name type="scientific">Staphylococcus aureus (strain bovine RF122 / ET3-1)</name>
    <dbReference type="NCBI Taxonomy" id="273036"/>
    <lineage>
        <taxon>Bacteria</taxon>
        <taxon>Bacillati</taxon>
        <taxon>Bacillota</taxon>
        <taxon>Bacilli</taxon>
        <taxon>Bacillales</taxon>
        <taxon>Staphylococcaceae</taxon>
        <taxon>Staphylococcus</taxon>
    </lineage>
</organism>
<protein>
    <recommendedName>
        <fullName evidence="2">Large ribosomal subunit protein uL11</fullName>
    </recommendedName>
    <alternativeName>
        <fullName evidence="3">50S ribosomal protein L11</fullName>
    </alternativeName>
</protein>
<keyword id="KW-0488">Methylation</keyword>
<keyword id="KW-0687">Ribonucleoprotein</keyword>
<keyword id="KW-0689">Ribosomal protein</keyword>
<keyword id="KW-0694">RNA-binding</keyword>
<keyword id="KW-0699">rRNA-binding</keyword>
<proteinExistence type="inferred from homology"/>
<comment type="function">
    <text evidence="2">Forms part of the ribosomal stalk which helps the ribosome interact with GTP-bound translation factors.</text>
</comment>
<comment type="subunit">
    <text evidence="2">Part of the ribosomal stalk of the 50S ribosomal subunit. Interacts with L10 and the large rRNA to form the base of the stalk. L10 forms an elongated spine to which L12 dimers bind in a sequential fashion forming a multimeric L10(L12)X complex.</text>
</comment>
<comment type="PTM">
    <text evidence="2">One or more lysine residues are methylated.</text>
</comment>
<comment type="similarity">
    <text evidence="2">Belongs to the universal ribosomal protein uL11 family.</text>
</comment>
<dbReference type="EMBL" id="AJ938182">
    <property type="protein sequence ID" value="CAI80176.1"/>
    <property type="molecule type" value="Genomic_DNA"/>
</dbReference>
<dbReference type="RefSeq" id="WP_001085789.1">
    <property type="nucleotide sequence ID" value="NC_007622.1"/>
</dbReference>
<dbReference type="SMR" id="Q2YSC4"/>
<dbReference type="KEGG" id="sab:SAB0488"/>
<dbReference type="HOGENOM" id="CLU_074237_2_1_9"/>
<dbReference type="GO" id="GO:0022625">
    <property type="term" value="C:cytosolic large ribosomal subunit"/>
    <property type="evidence" value="ECO:0007669"/>
    <property type="project" value="TreeGrafter"/>
</dbReference>
<dbReference type="GO" id="GO:0070180">
    <property type="term" value="F:large ribosomal subunit rRNA binding"/>
    <property type="evidence" value="ECO:0007669"/>
    <property type="project" value="UniProtKB-UniRule"/>
</dbReference>
<dbReference type="GO" id="GO:0003735">
    <property type="term" value="F:structural constituent of ribosome"/>
    <property type="evidence" value="ECO:0007669"/>
    <property type="project" value="InterPro"/>
</dbReference>
<dbReference type="GO" id="GO:0006412">
    <property type="term" value="P:translation"/>
    <property type="evidence" value="ECO:0007669"/>
    <property type="project" value="UniProtKB-UniRule"/>
</dbReference>
<dbReference type="CDD" id="cd00349">
    <property type="entry name" value="Ribosomal_L11"/>
    <property type="match status" value="1"/>
</dbReference>
<dbReference type="FunFam" id="1.10.10.250:FF:000001">
    <property type="entry name" value="50S ribosomal protein L11"/>
    <property type="match status" value="1"/>
</dbReference>
<dbReference type="FunFam" id="3.30.1550.10:FF:000001">
    <property type="entry name" value="50S ribosomal protein L11"/>
    <property type="match status" value="1"/>
</dbReference>
<dbReference type="Gene3D" id="1.10.10.250">
    <property type="entry name" value="Ribosomal protein L11, C-terminal domain"/>
    <property type="match status" value="1"/>
</dbReference>
<dbReference type="Gene3D" id="3.30.1550.10">
    <property type="entry name" value="Ribosomal protein L11/L12, N-terminal domain"/>
    <property type="match status" value="1"/>
</dbReference>
<dbReference type="HAMAP" id="MF_00736">
    <property type="entry name" value="Ribosomal_uL11"/>
    <property type="match status" value="1"/>
</dbReference>
<dbReference type="InterPro" id="IPR000911">
    <property type="entry name" value="Ribosomal_uL11"/>
</dbReference>
<dbReference type="InterPro" id="IPR006519">
    <property type="entry name" value="Ribosomal_uL11_bac-typ"/>
</dbReference>
<dbReference type="InterPro" id="IPR020783">
    <property type="entry name" value="Ribosomal_uL11_C"/>
</dbReference>
<dbReference type="InterPro" id="IPR036769">
    <property type="entry name" value="Ribosomal_uL11_C_sf"/>
</dbReference>
<dbReference type="InterPro" id="IPR020785">
    <property type="entry name" value="Ribosomal_uL11_CS"/>
</dbReference>
<dbReference type="InterPro" id="IPR020784">
    <property type="entry name" value="Ribosomal_uL11_N"/>
</dbReference>
<dbReference type="InterPro" id="IPR036796">
    <property type="entry name" value="Ribosomal_uL11_N_sf"/>
</dbReference>
<dbReference type="NCBIfam" id="TIGR01632">
    <property type="entry name" value="L11_bact"/>
    <property type="match status" value="1"/>
</dbReference>
<dbReference type="PANTHER" id="PTHR11661">
    <property type="entry name" value="60S RIBOSOMAL PROTEIN L12"/>
    <property type="match status" value="1"/>
</dbReference>
<dbReference type="PANTHER" id="PTHR11661:SF1">
    <property type="entry name" value="LARGE RIBOSOMAL SUBUNIT PROTEIN UL11M"/>
    <property type="match status" value="1"/>
</dbReference>
<dbReference type="Pfam" id="PF00298">
    <property type="entry name" value="Ribosomal_L11"/>
    <property type="match status" value="1"/>
</dbReference>
<dbReference type="Pfam" id="PF03946">
    <property type="entry name" value="Ribosomal_L11_N"/>
    <property type="match status" value="1"/>
</dbReference>
<dbReference type="SMART" id="SM00649">
    <property type="entry name" value="RL11"/>
    <property type="match status" value="1"/>
</dbReference>
<dbReference type="SUPFAM" id="SSF54747">
    <property type="entry name" value="Ribosomal L11/L12e N-terminal domain"/>
    <property type="match status" value="1"/>
</dbReference>
<dbReference type="SUPFAM" id="SSF46906">
    <property type="entry name" value="Ribosomal protein L11, C-terminal domain"/>
    <property type="match status" value="1"/>
</dbReference>
<dbReference type="PROSITE" id="PS00359">
    <property type="entry name" value="RIBOSOMAL_L11"/>
    <property type="match status" value="1"/>
</dbReference>
<evidence type="ECO:0000250" key="1"/>
<evidence type="ECO:0000255" key="2">
    <source>
        <dbReference type="HAMAP-Rule" id="MF_00736"/>
    </source>
</evidence>
<evidence type="ECO:0000305" key="3"/>
<sequence length="140" mass="14844">MAKKVDKVVKLQIPAGKANPAPPVGPALGQAGVNIMGFCKEFNARTQDQAGLIIPVEISVYEDRSFTFITKTPPAPVLLKKAAGIEKGSGEPNKAKVATVTKDQVREIANSKMQDLNAADEEAAMRIIEGTARSMGIVVE</sequence>
<feature type="initiator methionine" description="Removed" evidence="1">
    <location>
        <position position="1"/>
    </location>
</feature>
<feature type="chain" id="PRO_0000258218" description="Large ribosomal subunit protein uL11">
    <location>
        <begin position="2"/>
        <end position="140"/>
    </location>
</feature>
<accession>Q2YSC4</accession>